<proteinExistence type="evidence at protein level"/>
<reference key="1">
    <citation type="journal article" date="2001" name="Nucleic Acids Res.">
        <title>Human APE2 protein is mostly localized in the nuclei and to some extent in the mitochondria, while nuclear APE2 is partly associated with proliferating cell nuclear antigen.</title>
        <authorList>
            <person name="Tsuchimoto D."/>
            <person name="Sakai Y."/>
            <person name="Sakumi K."/>
            <person name="Nishioka K."/>
            <person name="Sasaki M."/>
            <person name="Fujiwara T."/>
            <person name="Nakabeppu Y."/>
        </authorList>
    </citation>
    <scope>NUCLEOTIDE SEQUENCE [MRNA]</scope>
    <scope>FUNCTION</scope>
    <scope>INTERACTION WITH PCNA</scope>
    <scope>SUBCELLULAR LOCATION</scope>
    <scope>TISSUE SPECIFICITY</scope>
    <scope>DOMAIN</scope>
    <source>
        <tissue>Leukemia</tissue>
    </source>
</reference>
<reference key="2">
    <citation type="submission" date="1998-09" db="EMBL/GenBank/DDBJ databases">
        <title>Putative human AP endonuclease XTH2.</title>
        <authorList>
            <person name="Luna L."/>
            <person name="Rognes T."/>
            <person name="Henriksen A.C."/>
            <person name="Bjoras M."/>
            <person name="Seeberg E."/>
        </authorList>
    </citation>
    <scope>NUCLEOTIDE SEQUENCE [MRNA]</scope>
    <source>
        <tissue>Lung tumor</tissue>
    </source>
</reference>
<reference key="3">
    <citation type="submission" date="1998-12" db="EMBL/GenBank/DDBJ databases">
        <title>cDNA cloning and characterization of human APEX nuclease-like 2 (APEXL2) protein.</title>
        <authorList>
            <person name="Akiyama K."/>
            <person name="Sarker A.H."/>
            <person name="Yao M."/>
            <person name="Tsutsui K."/>
            <person name="Seki S."/>
        </authorList>
    </citation>
    <scope>NUCLEOTIDE SEQUENCE [MRNA]</scope>
    <source>
        <tissue>Bone marrow</tissue>
    </source>
</reference>
<reference key="4">
    <citation type="submission" date="1999-01" db="EMBL/GenBank/DDBJ databases">
        <authorList>
            <person name="Hadi M.Z."/>
            <person name="Erzberger J.P."/>
            <person name="Ramirez M.H."/>
            <person name="Thelen M.P."/>
            <person name="Wilson D.M. III"/>
        </authorList>
    </citation>
    <scope>NUCLEOTIDE SEQUENCE [MRNA]</scope>
    <source>
        <tissue>Lung tumor</tissue>
    </source>
</reference>
<reference key="5">
    <citation type="submission" date="2005-01" db="EMBL/GenBank/DDBJ databases">
        <authorList>
            <consortium name="NIEHS SNPs program"/>
        </authorList>
    </citation>
    <scope>NUCLEOTIDE SEQUENCE [GENOMIC DNA]</scope>
    <scope>VARIANT CYS-141</scope>
</reference>
<reference key="6">
    <citation type="journal article" date="2005" name="Nature">
        <title>The DNA sequence of the human X chromosome.</title>
        <authorList>
            <person name="Ross M.T."/>
            <person name="Grafham D.V."/>
            <person name="Coffey A.J."/>
            <person name="Scherer S."/>
            <person name="McLay K."/>
            <person name="Muzny D."/>
            <person name="Platzer M."/>
            <person name="Howell G.R."/>
            <person name="Burrows C."/>
            <person name="Bird C.P."/>
            <person name="Frankish A."/>
            <person name="Lovell F.L."/>
            <person name="Howe K.L."/>
            <person name="Ashurst J.L."/>
            <person name="Fulton R.S."/>
            <person name="Sudbrak R."/>
            <person name="Wen G."/>
            <person name="Jones M.C."/>
            <person name="Hurles M.E."/>
            <person name="Andrews T.D."/>
            <person name="Scott C.E."/>
            <person name="Searle S."/>
            <person name="Ramser J."/>
            <person name="Whittaker A."/>
            <person name="Deadman R."/>
            <person name="Carter N.P."/>
            <person name="Hunt S.E."/>
            <person name="Chen R."/>
            <person name="Cree A."/>
            <person name="Gunaratne P."/>
            <person name="Havlak P."/>
            <person name="Hodgson A."/>
            <person name="Metzker M.L."/>
            <person name="Richards S."/>
            <person name="Scott G."/>
            <person name="Steffen D."/>
            <person name="Sodergren E."/>
            <person name="Wheeler D.A."/>
            <person name="Worley K.C."/>
            <person name="Ainscough R."/>
            <person name="Ambrose K.D."/>
            <person name="Ansari-Lari M.A."/>
            <person name="Aradhya S."/>
            <person name="Ashwell R.I."/>
            <person name="Babbage A.K."/>
            <person name="Bagguley C.L."/>
            <person name="Ballabio A."/>
            <person name="Banerjee R."/>
            <person name="Barker G.E."/>
            <person name="Barlow K.F."/>
            <person name="Barrett I.P."/>
            <person name="Bates K.N."/>
            <person name="Beare D.M."/>
            <person name="Beasley H."/>
            <person name="Beasley O."/>
            <person name="Beck A."/>
            <person name="Bethel G."/>
            <person name="Blechschmidt K."/>
            <person name="Brady N."/>
            <person name="Bray-Allen S."/>
            <person name="Bridgeman A.M."/>
            <person name="Brown A.J."/>
            <person name="Brown M.J."/>
            <person name="Bonnin D."/>
            <person name="Bruford E.A."/>
            <person name="Buhay C."/>
            <person name="Burch P."/>
            <person name="Burford D."/>
            <person name="Burgess J."/>
            <person name="Burrill W."/>
            <person name="Burton J."/>
            <person name="Bye J.M."/>
            <person name="Carder C."/>
            <person name="Carrel L."/>
            <person name="Chako J."/>
            <person name="Chapman J.C."/>
            <person name="Chavez D."/>
            <person name="Chen E."/>
            <person name="Chen G."/>
            <person name="Chen Y."/>
            <person name="Chen Z."/>
            <person name="Chinault C."/>
            <person name="Ciccodicola A."/>
            <person name="Clark S.Y."/>
            <person name="Clarke G."/>
            <person name="Clee C.M."/>
            <person name="Clegg S."/>
            <person name="Clerc-Blankenburg K."/>
            <person name="Clifford K."/>
            <person name="Cobley V."/>
            <person name="Cole C.G."/>
            <person name="Conquer J.S."/>
            <person name="Corby N."/>
            <person name="Connor R.E."/>
            <person name="David R."/>
            <person name="Davies J."/>
            <person name="Davis C."/>
            <person name="Davis J."/>
            <person name="Delgado O."/>
            <person name="Deshazo D."/>
            <person name="Dhami P."/>
            <person name="Ding Y."/>
            <person name="Dinh H."/>
            <person name="Dodsworth S."/>
            <person name="Draper H."/>
            <person name="Dugan-Rocha S."/>
            <person name="Dunham A."/>
            <person name="Dunn M."/>
            <person name="Durbin K.J."/>
            <person name="Dutta I."/>
            <person name="Eades T."/>
            <person name="Ellwood M."/>
            <person name="Emery-Cohen A."/>
            <person name="Errington H."/>
            <person name="Evans K.L."/>
            <person name="Faulkner L."/>
            <person name="Francis F."/>
            <person name="Frankland J."/>
            <person name="Fraser A.E."/>
            <person name="Galgoczy P."/>
            <person name="Gilbert J."/>
            <person name="Gill R."/>
            <person name="Gloeckner G."/>
            <person name="Gregory S.G."/>
            <person name="Gribble S."/>
            <person name="Griffiths C."/>
            <person name="Grocock R."/>
            <person name="Gu Y."/>
            <person name="Gwilliam R."/>
            <person name="Hamilton C."/>
            <person name="Hart E.A."/>
            <person name="Hawes A."/>
            <person name="Heath P.D."/>
            <person name="Heitmann K."/>
            <person name="Hennig S."/>
            <person name="Hernandez J."/>
            <person name="Hinzmann B."/>
            <person name="Ho S."/>
            <person name="Hoffs M."/>
            <person name="Howden P.J."/>
            <person name="Huckle E.J."/>
            <person name="Hume J."/>
            <person name="Hunt P.J."/>
            <person name="Hunt A.R."/>
            <person name="Isherwood J."/>
            <person name="Jacob L."/>
            <person name="Johnson D."/>
            <person name="Jones S."/>
            <person name="de Jong P.J."/>
            <person name="Joseph S.S."/>
            <person name="Keenan S."/>
            <person name="Kelly S."/>
            <person name="Kershaw J.K."/>
            <person name="Khan Z."/>
            <person name="Kioschis P."/>
            <person name="Klages S."/>
            <person name="Knights A.J."/>
            <person name="Kosiura A."/>
            <person name="Kovar-Smith C."/>
            <person name="Laird G.K."/>
            <person name="Langford C."/>
            <person name="Lawlor S."/>
            <person name="Leversha M."/>
            <person name="Lewis L."/>
            <person name="Liu W."/>
            <person name="Lloyd C."/>
            <person name="Lloyd D.M."/>
            <person name="Loulseged H."/>
            <person name="Loveland J.E."/>
            <person name="Lovell J.D."/>
            <person name="Lozado R."/>
            <person name="Lu J."/>
            <person name="Lyne R."/>
            <person name="Ma J."/>
            <person name="Maheshwari M."/>
            <person name="Matthews L.H."/>
            <person name="McDowall J."/>
            <person name="McLaren S."/>
            <person name="McMurray A."/>
            <person name="Meidl P."/>
            <person name="Meitinger T."/>
            <person name="Milne S."/>
            <person name="Miner G."/>
            <person name="Mistry S.L."/>
            <person name="Morgan M."/>
            <person name="Morris S."/>
            <person name="Mueller I."/>
            <person name="Mullikin J.C."/>
            <person name="Nguyen N."/>
            <person name="Nordsiek G."/>
            <person name="Nyakatura G."/>
            <person name="O'dell C.N."/>
            <person name="Okwuonu G."/>
            <person name="Palmer S."/>
            <person name="Pandian R."/>
            <person name="Parker D."/>
            <person name="Parrish J."/>
            <person name="Pasternak S."/>
            <person name="Patel D."/>
            <person name="Pearce A.V."/>
            <person name="Pearson D.M."/>
            <person name="Pelan S.E."/>
            <person name="Perez L."/>
            <person name="Porter K.M."/>
            <person name="Ramsey Y."/>
            <person name="Reichwald K."/>
            <person name="Rhodes S."/>
            <person name="Ridler K.A."/>
            <person name="Schlessinger D."/>
            <person name="Schueler M.G."/>
            <person name="Sehra H.K."/>
            <person name="Shaw-Smith C."/>
            <person name="Shen H."/>
            <person name="Sheridan E.M."/>
            <person name="Shownkeen R."/>
            <person name="Skuce C.D."/>
            <person name="Smith M.L."/>
            <person name="Sotheran E.C."/>
            <person name="Steingruber H.E."/>
            <person name="Steward C.A."/>
            <person name="Storey R."/>
            <person name="Swann R.M."/>
            <person name="Swarbreck D."/>
            <person name="Tabor P.E."/>
            <person name="Taudien S."/>
            <person name="Taylor T."/>
            <person name="Teague B."/>
            <person name="Thomas K."/>
            <person name="Thorpe A."/>
            <person name="Timms K."/>
            <person name="Tracey A."/>
            <person name="Trevanion S."/>
            <person name="Tromans A.C."/>
            <person name="d'Urso M."/>
            <person name="Verduzco D."/>
            <person name="Villasana D."/>
            <person name="Waldron L."/>
            <person name="Wall M."/>
            <person name="Wang Q."/>
            <person name="Warren J."/>
            <person name="Warry G.L."/>
            <person name="Wei X."/>
            <person name="West A."/>
            <person name="Whitehead S.L."/>
            <person name="Whiteley M.N."/>
            <person name="Wilkinson J.E."/>
            <person name="Willey D.L."/>
            <person name="Williams G."/>
            <person name="Williams L."/>
            <person name="Williamson A."/>
            <person name="Williamson H."/>
            <person name="Wilming L."/>
            <person name="Woodmansey R.L."/>
            <person name="Wray P.W."/>
            <person name="Yen J."/>
            <person name="Zhang J."/>
            <person name="Zhou J."/>
            <person name="Zoghbi H."/>
            <person name="Zorilla S."/>
            <person name="Buck D."/>
            <person name="Reinhardt R."/>
            <person name="Poustka A."/>
            <person name="Rosenthal A."/>
            <person name="Lehrach H."/>
            <person name="Meindl A."/>
            <person name="Minx P.J."/>
            <person name="Hillier L.W."/>
            <person name="Willard H.F."/>
            <person name="Wilson R.K."/>
            <person name="Waterston R.H."/>
            <person name="Rice C.M."/>
            <person name="Vaudin M."/>
            <person name="Coulson A."/>
            <person name="Nelson D.L."/>
            <person name="Weinstock G."/>
            <person name="Sulston J.E."/>
            <person name="Durbin R.M."/>
            <person name="Hubbard T."/>
            <person name="Gibbs R.A."/>
            <person name="Beck S."/>
            <person name="Rogers J."/>
            <person name="Bentley D.R."/>
        </authorList>
    </citation>
    <scope>NUCLEOTIDE SEQUENCE [LARGE SCALE GENOMIC DNA]</scope>
</reference>
<reference key="7">
    <citation type="journal article" date="2004" name="Genome Res.">
        <title>The status, quality, and expansion of the NIH full-length cDNA project: the Mammalian Gene Collection (MGC).</title>
        <authorList>
            <consortium name="The MGC Project Team"/>
        </authorList>
    </citation>
    <scope>NUCLEOTIDE SEQUENCE [LARGE SCALE MRNA]</scope>
    <source>
        <tissue>Lung</tissue>
    </source>
</reference>
<reference key="8">
    <citation type="journal article" date="2006" name="Nucleic Acids Res.">
        <title>Human Ape2 protein has a 3'-5' exonuclease activity that acts preferentially on mismatched base pairs.</title>
        <authorList>
            <person name="Burkovics P."/>
            <person name="Szukacsov V."/>
            <person name="Unk I."/>
            <person name="Haracska L."/>
        </authorList>
    </citation>
    <scope>FUNCTION</scope>
    <scope>CATALYTIC ACTIVITY</scope>
    <scope>ACTIVITY REGULATION</scope>
    <scope>BIOPHYSICOCHEMICAL PROPERTIES</scope>
    <scope>MUTAGENESIS OF ASP-277</scope>
</reference>
<reference key="9">
    <citation type="journal article" date="2008" name="Proc. Natl. Acad. Sci. U.S.A.">
        <title>A quantitative atlas of mitotic phosphorylation.</title>
        <authorList>
            <person name="Dephoure N."/>
            <person name="Zhou C."/>
            <person name="Villen J."/>
            <person name="Beausoleil S.A."/>
            <person name="Bakalarski C.E."/>
            <person name="Elledge S.J."/>
            <person name="Gygi S.P."/>
        </authorList>
    </citation>
    <scope>IDENTIFICATION BY MASS SPECTROMETRY [LARGE SCALE ANALYSIS]</scope>
    <source>
        <tissue>Cervix carcinoma</tissue>
    </source>
</reference>
<reference key="10">
    <citation type="journal article" date="2024" name="Nat. Struct. Mol. Biol.">
        <title>Noncanonical assembly, neddylation and chimeric cullin-RING/RBR ubiquitylation by the 1.8 MDa CUL9 E3 ligase complex.</title>
        <authorList>
            <person name="Horn-Ghetko D."/>
            <person name="Hopf L.V.M."/>
            <person name="Tripathi-Giesgen I."/>
            <person name="Du J."/>
            <person name="Kostrhon S."/>
            <person name="Vu D.T."/>
            <person name="Beier V."/>
            <person name="Steigenberger B."/>
            <person name="Prabu J.R."/>
            <person name="Stier L."/>
            <person name="Bruss E.M."/>
            <person name="Mann M."/>
            <person name="Xiong Y."/>
            <person name="Schulman B.A."/>
        </authorList>
    </citation>
    <scope>UBIQUITINATION BY CUL9-RBX1 COMPLEX</scope>
</reference>
<reference key="11">
    <citation type="journal article" date="2009" name="Nucleic Acids Res.">
        <title>Role of PCNA-dependent stimulation of 3'-phosphodiesterase and 3'-5' exonuclease activities of human Ape2 in repair of oxidative DNA damage.</title>
        <authorList>
            <person name="Burkovics P."/>
            <person name="Hajdu I."/>
            <person name="Szukacsov V."/>
            <person name="Unk I."/>
            <person name="Haracska L."/>
        </authorList>
    </citation>
    <scope>FUNCTION</scope>
    <scope>CATALYTIC ACTIVITY</scope>
    <scope>ACTIVITY REGULATION</scope>
    <scope>SUBCELLULAR LOCATION</scope>
    <scope>MUTAGENESIS OF TYR-396 AND PHE-397</scope>
</reference>
<reference key="12">
    <citation type="journal article" date="2020" name="Mol. Cell">
        <title>Endogenous DNA 3' Blocks Are Vulnerabilities for BRCA1 and BRCA2 Deficiency and Are Reversed by the APE2 Nuclease.</title>
        <authorList>
            <person name="Alvarez-Quilon A."/>
            <person name="Wojtaszek J.L."/>
            <person name="Mathieu M.C."/>
            <person name="Patel T."/>
            <person name="Appel C.D."/>
            <person name="Hustedt N."/>
            <person name="Rossi S.E."/>
            <person name="Wallace B.D."/>
            <person name="Setiaputra D."/>
            <person name="Adam S."/>
            <person name="Ohashi Y."/>
            <person name="Melo H."/>
            <person name="Cho T."/>
            <person name="Gervais C."/>
            <person name="Munoz I.M."/>
            <person name="Grazzini E."/>
            <person name="Young J.T.F."/>
            <person name="Rouse J."/>
            <person name="Zinda M."/>
            <person name="Williams R.S."/>
            <person name="Durocher D."/>
        </authorList>
    </citation>
    <scope>FUNCTION</scope>
    <scope>CATALYTIC ACTIVITY</scope>
    <scope>INTERACTION WITH PCNA</scope>
    <scope>DOMAIN</scope>
    <scope>MUTAGENESIS OF GLU-48; ASP-197 AND 396-TYR-PHE-397</scope>
</reference>
<reference key="13">
    <citation type="journal article" date="2024" name="J. Biol. Chem.">
        <title>Ubiquitin-mediated regulation of APE2 protein abundance.</title>
        <authorList>
            <person name="McMahon A."/>
            <person name="Zhao J."/>
            <person name="Yan S."/>
        </authorList>
    </citation>
    <scope>UBIQUITINATION AT LYS-371</scope>
</reference>
<reference key="14">
    <citation type="journal article" date="2011" name="Nucleic Acids Res.">
        <title>Identification of rare DNA variants in mitochondrial disorders with improved array-based sequencing.</title>
        <authorList>
            <person name="Wang W."/>
            <person name="Shen P."/>
            <person name="Thiyagarajan S."/>
            <person name="Lin S."/>
            <person name="Palm C."/>
            <person name="Horvath R."/>
            <person name="Klopstock T."/>
            <person name="Cutler D."/>
            <person name="Pique L."/>
            <person name="Schrijver I."/>
            <person name="Davis R.W."/>
            <person name="Mindrinos M."/>
            <person name="Speed T.P."/>
            <person name="Scharfe C."/>
        </authorList>
    </citation>
    <scope>VARIANTS TYR-269 AND HIS-392</scope>
</reference>
<organism>
    <name type="scientific">Homo sapiens</name>
    <name type="common">Human</name>
    <dbReference type="NCBI Taxonomy" id="9606"/>
    <lineage>
        <taxon>Eukaryota</taxon>
        <taxon>Metazoa</taxon>
        <taxon>Chordata</taxon>
        <taxon>Craniata</taxon>
        <taxon>Vertebrata</taxon>
        <taxon>Euteleostomi</taxon>
        <taxon>Mammalia</taxon>
        <taxon>Eutheria</taxon>
        <taxon>Euarchontoglires</taxon>
        <taxon>Primates</taxon>
        <taxon>Haplorrhini</taxon>
        <taxon>Catarrhini</taxon>
        <taxon>Hominidae</taxon>
        <taxon>Homo</taxon>
    </lineage>
</organism>
<feature type="chain" id="PRO_0000200014" description="DNA-(apurinic or apyrimidinic site) endonuclease 2">
    <location>
        <begin position="1"/>
        <end position="518"/>
    </location>
</feature>
<feature type="zinc finger region" description="GRF-type" evidence="4">
    <location>
        <begin position="469"/>
        <end position="518"/>
    </location>
</feature>
<feature type="region of interest" description="Disordered" evidence="5">
    <location>
        <begin position="355"/>
        <end position="407"/>
    </location>
</feature>
<feature type="region of interest" description="Required for the interaction and colocalization with PCNA in nuclear foci in presence of oxidative-induced DNA damaging agents" evidence="6 10">
    <location>
        <begin position="390"/>
        <end position="397"/>
    </location>
</feature>
<feature type="compositionally biased region" description="Polar residues" evidence="5">
    <location>
        <begin position="355"/>
        <end position="405"/>
    </location>
</feature>
<feature type="active site" evidence="1">
    <location>
        <position position="156"/>
    </location>
</feature>
<feature type="active site" description="Proton donor/acceptor" evidence="1">
    <location>
        <position position="197"/>
    </location>
</feature>
<feature type="active site" description="Proton acceptor" evidence="3">
    <location>
        <position position="304"/>
    </location>
</feature>
<feature type="binding site" evidence="3">
    <location>
        <position position="8"/>
    </location>
    <ligand>
        <name>Mg(2+)</name>
        <dbReference type="ChEBI" id="CHEBI:18420"/>
        <label>1</label>
    </ligand>
</feature>
<feature type="binding site" evidence="3">
    <location>
        <position position="48"/>
    </location>
    <ligand>
        <name>Mg(2+)</name>
        <dbReference type="ChEBI" id="CHEBI:18420"/>
        <label>1</label>
    </ligand>
</feature>
<feature type="binding site" evidence="3">
    <location>
        <position position="197"/>
    </location>
    <ligand>
        <name>Mg(2+)</name>
        <dbReference type="ChEBI" id="CHEBI:18420"/>
        <label>2</label>
    </ligand>
</feature>
<feature type="binding site" evidence="3">
    <location>
        <position position="199"/>
    </location>
    <ligand>
        <name>Mg(2+)</name>
        <dbReference type="ChEBI" id="CHEBI:18420"/>
        <label>2</label>
    </ligand>
</feature>
<feature type="binding site" evidence="3">
    <location>
        <position position="303"/>
    </location>
    <ligand>
        <name>Mg(2+)</name>
        <dbReference type="ChEBI" id="CHEBI:18420"/>
        <label>1</label>
    </ligand>
</feature>
<feature type="binding site" evidence="3">
    <location>
        <position position="304"/>
    </location>
    <ligand>
        <name>Mg(2+)</name>
        <dbReference type="ChEBI" id="CHEBI:18420"/>
        <label>2</label>
    </ligand>
</feature>
<feature type="binding site" evidence="4">
    <location>
        <position position="469"/>
    </location>
    <ligand>
        <name>Zn(2+)</name>
        <dbReference type="ChEBI" id="CHEBI:29105"/>
    </ligand>
</feature>
<feature type="binding site" evidence="4">
    <location>
        <position position="472"/>
    </location>
    <ligand>
        <name>Zn(2+)</name>
        <dbReference type="ChEBI" id="CHEBI:29105"/>
    </ligand>
</feature>
<feature type="binding site" evidence="4">
    <location>
        <position position="495"/>
    </location>
    <ligand>
        <name>Zn(2+)</name>
        <dbReference type="ChEBI" id="CHEBI:29105"/>
    </ligand>
</feature>
<feature type="binding site" evidence="4">
    <location>
        <position position="509"/>
    </location>
    <ligand>
        <name>Zn(2+)</name>
        <dbReference type="ChEBI" id="CHEBI:29105"/>
    </ligand>
</feature>
<feature type="site" description="Transition state stabilizer" evidence="1">
    <location>
        <position position="199"/>
    </location>
</feature>
<feature type="site" description="Important for catalytic activity" evidence="1">
    <location>
        <position position="277"/>
    </location>
</feature>
<feature type="site" description="Interaction with DNA substrate" evidence="1">
    <location>
        <position position="304"/>
    </location>
</feature>
<feature type="cross-link" description="Glycyl lysine isopeptide (Lys-Gly) (interchain with G-Cter in ubiquitin)" evidence="12">
    <location>
        <position position="371"/>
    </location>
</feature>
<feature type="sequence variant" id="VAR_023390" description="In dbSNP:rs2301416." evidence="13">
    <original>R</original>
    <variation>C</variation>
    <location>
        <position position="141"/>
    </location>
</feature>
<feature type="sequence variant" id="VAR_048261" description="In dbSNP:rs2301416.">
    <original>R</original>
    <variation>W</variation>
    <location>
        <position position="141"/>
    </location>
</feature>
<feature type="sequence variant" id="VAR_064033" description="Identified in a patient with mtDNA maintenance disorders; dbSNP:rs145122391." evidence="9">
    <original>H</original>
    <variation>Y</variation>
    <location>
        <position position="269"/>
    </location>
</feature>
<feature type="sequence variant" id="VAR_064034" description="Identified in a patient with mtDNA maintenance disorders; dbSNP:rs201964062." evidence="9">
    <original>N</original>
    <variation>H</variation>
    <location>
        <position position="392"/>
    </location>
</feature>
<feature type="mutagenesis site" description="Abolished 3'-5' exonuclease activity; when associated with Asn-197. Synthetic lethality in a BRCA1 or BRCA2 mutant cell line background; when associated with Asn-197." evidence="10">
    <original>E</original>
    <variation>Q</variation>
    <location>
        <position position="48"/>
    </location>
</feature>
<feature type="mutagenesis site" description="Abolished 3'-5' exonuclease activity; when associated with Gln-48. Synthetic lethality in a BRCA1 or BRCA2 mutant cell line background; when associated with Gln-48." evidence="10">
    <original>D</original>
    <variation>N</variation>
    <location>
        <position position="197"/>
    </location>
</feature>
<feature type="mutagenesis site" description="Abolishes AP endodeoxyribonuclease, 3'-5' exonuclease activity and 3'-phosphodiesterase activities.">
    <original>H</original>
    <variation>A</variation>
    <location>
        <position position="269"/>
    </location>
</feature>
<feature type="mutagenesis site" description="Abolishes AP endodeoxyribonuclease, 3'-5' exonuclease activity and 3'-phosphodiesterase activities." evidence="7">
    <original>D</original>
    <variation>A</variation>
    <location>
        <position position="277"/>
    </location>
</feature>
<feature type="mutagenesis site" description="Loss of interaction with PCNA." evidence="10">
    <original>YF</original>
    <variation>AA</variation>
    <location>
        <begin position="396"/>
        <end position="397"/>
    </location>
</feature>
<feature type="mutagenesis site" description="Reduces 3'-5' exonuclease activity in presence of PCNA. Does not abolish the 3'-5' exonuclease activity. Does only partially redistributes together with PCNA in nuclear foci in presence of oxidative-induced DNA damaging agents." evidence="8">
    <original>Y</original>
    <variation>A</variation>
    <location>
        <position position="396"/>
    </location>
</feature>
<feature type="mutagenesis site" description="Reduces 3'-5' exonuclease activity in presence of PCNA. Does not abolish the 3'-5' exonuclease activity. Does only partially redistributes together with PCNA in nuclear foci in presence of oxidative-induced DNA damaging agents." evidence="8">
    <original>F</original>
    <variation>A</variation>
    <location>
        <position position="397"/>
    </location>
</feature>
<feature type="sequence conflict" description="In Ref. 4; AAD43041." evidence="14" ref="4">
    <original>P</original>
    <variation>S</variation>
    <location>
        <position position="399"/>
    </location>
</feature>
<protein>
    <recommendedName>
        <fullName>DNA-(apurinic or apyrimidinic site) endonuclease 2</fullName>
        <ecNumber evidence="7 8 10">3.1.11.2</ecNumber>
    </recommendedName>
    <alternativeName>
        <fullName>AP endonuclease XTH2</fullName>
    </alternativeName>
    <alternativeName>
        <fullName>APEX nuclease 2</fullName>
    </alternativeName>
    <alternativeName>
        <fullName>APEX nuclease-like 2</fullName>
    </alternativeName>
    <alternativeName>
        <fullName>Apurinic-apyrimidinic endonuclease 2</fullName>
        <shortName>AP endonuclease 2</shortName>
    </alternativeName>
</protein>
<accession>Q9UBZ4</accession>
<accession>Q9Y5X7</accession>
<keyword id="KW-0131">Cell cycle</keyword>
<keyword id="KW-0963">Cytoplasm</keyword>
<keyword id="KW-0227">DNA damage</keyword>
<keyword id="KW-0233">DNA recombination</keyword>
<keyword id="KW-0234">DNA repair</keyword>
<keyword id="KW-0238">DNA-binding</keyword>
<keyword id="KW-0255">Endonuclease</keyword>
<keyword id="KW-0269">Exonuclease</keyword>
<keyword id="KW-0378">Hydrolase</keyword>
<keyword id="KW-1017">Isopeptide bond</keyword>
<keyword id="KW-0460">Magnesium</keyword>
<keyword id="KW-0479">Metal-binding</keyword>
<keyword id="KW-0496">Mitochondrion</keyword>
<keyword id="KW-0540">Nuclease</keyword>
<keyword id="KW-0539">Nucleus</keyword>
<keyword id="KW-1267">Proteomics identification</keyword>
<keyword id="KW-1185">Reference proteome</keyword>
<keyword id="KW-0832">Ubl conjugation</keyword>
<keyword id="KW-0862">Zinc</keyword>
<keyword id="KW-0863">Zinc-finger</keyword>
<dbReference type="EC" id="3.1.11.2" evidence="7 8 10"/>
<dbReference type="EMBL" id="AB049211">
    <property type="protein sequence ID" value="BAB13764.1"/>
    <property type="molecule type" value="mRNA"/>
</dbReference>
<dbReference type="EMBL" id="AJ011311">
    <property type="protein sequence ID" value="CAB45242.1"/>
    <property type="molecule type" value="mRNA"/>
</dbReference>
<dbReference type="EMBL" id="AB021260">
    <property type="protein sequence ID" value="BAA78422.1"/>
    <property type="molecule type" value="mRNA"/>
</dbReference>
<dbReference type="EMBL" id="AF119046">
    <property type="protein sequence ID" value="AAD43041.1"/>
    <property type="molecule type" value="mRNA"/>
</dbReference>
<dbReference type="EMBL" id="AY884244">
    <property type="protein sequence ID" value="AAW56941.1"/>
    <property type="molecule type" value="Genomic_DNA"/>
</dbReference>
<dbReference type="EMBL" id="AL020991">
    <property type="status" value="NOT_ANNOTATED_CDS"/>
    <property type="molecule type" value="Genomic_DNA"/>
</dbReference>
<dbReference type="EMBL" id="BC002959">
    <property type="protein sequence ID" value="AAH02959.1"/>
    <property type="molecule type" value="mRNA"/>
</dbReference>
<dbReference type="CCDS" id="CCDS14365.1"/>
<dbReference type="RefSeq" id="NP_055296.2">
    <property type="nucleotide sequence ID" value="NM_014481.3"/>
</dbReference>
<dbReference type="SMR" id="Q9UBZ4"/>
<dbReference type="BioGRID" id="118124">
    <property type="interactions" value="38"/>
</dbReference>
<dbReference type="FunCoup" id="Q9UBZ4">
    <property type="interactions" value="2602"/>
</dbReference>
<dbReference type="IntAct" id="Q9UBZ4">
    <property type="interactions" value="31"/>
</dbReference>
<dbReference type="STRING" id="9606.ENSP00000364126"/>
<dbReference type="GlyGen" id="Q9UBZ4">
    <property type="glycosylation" value="3 sites, 2 N-linked glycans (2 sites)"/>
</dbReference>
<dbReference type="iPTMnet" id="Q9UBZ4"/>
<dbReference type="PhosphoSitePlus" id="Q9UBZ4"/>
<dbReference type="BioMuta" id="APEX2"/>
<dbReference type="DMDM" id="73921676"/>
<dbReference type="jPOST" id="Q9UBZ4"/>
<dbReference type="MassIVE" id="Q9UBZ4"/>
<dbReference type="PaxDb" id="9606-ENSP00000364126"/>
<dbReference type="PeptideAtlas" id="Q9UBZ4"/>
<dbReference type="ProteomicsDB" id="84104"/>
<dbReference type="Pumba" id="Q9UBZ4"/>
<dbReference type="Antibodypedia" id="26902">
    <property type="antibodies" value="161 antibodies from 26 providers"/>
</dbReference>
<dbReference type="DNASU" id="27301"/>
<dbReference type="Ensembl" id="ENST00000374987.4">
    <property type="protein sequence ID" value="ENSP00000364126.3"/>
    <property type="gene ID" value="ENSG00000169188.5"/>
</dbReference>
<dbReference type="GeneID" id="27301"/>
<dbReference type="KEGG" id="hsa:27301"/>
<dbReference type="MANE-Select" id="ENST00000374987.4">
    <property type="protein sequence ID" value="ENSP00000364126.3"/>
    <property type="RefSeq nucleotide sequence ID" value="NM_014481.4"/>
    <property type="RefSeq protein sequence ID" value="NP_055296.2"/>
</dbReference>
<dbReference type="UCSC" id="uc004dtz.5">
    <property type="organism name" value="human"/>
</dbReference>
<dbReference type="AGR" id="HGNC:17889"/>
<dbReference type="CTD" id="27301"/>
<dbReference type="DisGeNET" id="27301"/>
<dbReference type="GeneCards" id="APEX2"/>
<dbReference type="HGNC" id="HGNC:17889">
    <property type="gene designation" value="APEX2"/>
</dbReference>
<dbReference type="HPA" id="ENSG00000169188">
    <property type="expression patterns" value="Low tissue specificity"/>
</dbReference>
<dbReference type="MIM" id="300773">
    <property type="type" value="gene"/>
</dbReference>
<dbReference type="neXtProt" id="NX_Q9UBZ4"/>
<dbReference type="OpenTargets" id="ENSG00000169188"/>
<dbReference type="PharmGKB" id="PA38474"/>
<dbReference type="VEuPathDB" id="HostDB:ENSG00000169188"/>
<dbReference type="eggNOG" id="KOG1294">
    <property type="taxonomic scope" value="Eukaryota"/>
</dbReference>
<dbReference type="GeneTree" id="ENSGT00530000063540"/>
<dbReference type="HOGENOM" id="CLU_010374_3_0_1"/>
<dbReference type="InParanoid" id="Q9UBZ4"/>
<dbReference type="OMA" id="SFWICPR"/>
<dbReference type="OrthoDB" id="391817at2759"/>
<dbReference type="PAN-GO" id="Q9UBZ4">
    <property type="GO annotations" value="5 GO annotations based on evolutionary models"/>
</dbReference>
<dbReference type="PhylomeDB" id="Q9UBZ4"/>
<dbReference type="TreeFam" id="TF328442"/>
<dbReference type="BRENDA" id="4.2.99.18">
    <property type="organism ID" value="2681"/>
</dbReference>
<dbReference type="PathwayCommons" id="Q9UBZ4"/>
<dbReference type="SignaLink" id="Q9UBZ4"/>
<dbReference type="BioGRID-ORCS" id="27301">
    <property type="hits" value="59 hits in 782 CRISPR screens"/>
</dbReference>
<dbReference type="ChiTaRS" id="APEX2">
    <property type="organism name" value="human"/>
</dbReference>
<dbReference type="GenomeRNAi" id="27301"/>
<dbReference type="Pharos" id="Q9UBZ4">
    <property type="development level" value="Tbio"/>
</dbReference>
<dbReference type="PRO" id="PR:Q9UBZ4"/>
<dbReference type="Proteomes" id="UP000005640">
    <property type="component" value="Chromosome X"/>
</dbReference>
<dbReference type="RNAct" id="Q9UBZ4">
    <property type="molecule type" value="protein"/>
</dbReference>
<dbReference type="Bgee" id="ENSG00000169188">
    <property type="expression patterns" value="Expressed in endometrium epithelium and 165 other cell types or tissues"/>
</dbReference>
<dbReference type="ExpressionAtlas" id="Q9UBZ4">
    <property type="expression patterns" value="baseline and differential"/>
</dbReference>
<dbReference type="GO" id="GO:0001650">
    <property type="term" value="C:fibrillar center"/>
    <property type="evidence" value="ECO:0000314"/>
    <property type="project" value="HPA"/>
</dbReference>
<dbReference type="GO" id="GO:0043231">
    <property type="term" value="C:intracellular membrane-bounded organelle"/>
    <property type="evidence" value="ECO:0000314"/>
    <property type="project" value="HPA"/>
</dbReference>
<dbReference type="GO" id="GO:0005739">
    <property type="term" value="C:mitochondrion"/>
    <property type="evidence" value="ECO:0006056"/>
    <property type="project" value="FlyBase"/>
</dbReference>
<dbReference type="GO" id="GO:0005654">
    <property type="term" value="C:nucleoplasm"/>
    <property type="evidence" value="ECO:0000314"/>
    <property type="project" value="HPA"/>
</dbReference>
<dbReference type="GO" id="GO:0005634">
    <property type="term" value="C:nucleus"/>
    <property type="evidence" value="ECO:0000318"/>
    <property type="project" value="GO_Central"/>
</dbReference>
<dbReference type="GO" id="GO:0003677">
    <property type="term" value="F:DNA binding"/>
    <property type="evidence" value="ECO:0007669"/>
    <property type="project" value="UniProtKB-KW"/>
</dbReference>
<dbReference type="GO" id="GO:0003906">
    <property type="term" value="F:DNA-(apurinic or apyrimidinic site) endonuclease activity"/>
    <property type="evidence" value="ECO:0000318"/>
    <property type="project" value="GO_Central"/>
</dbReference>
<dbReference type="GO" id="GO:0008311">
    <property type="term" value="F:double-stranded DNA 3'-5' DNA exonuclease activity"/>
    <property type="evidence" value="ECO:0000318"/>
    <property type="project" value="GO_Central"/>
</dbReference>
<dbReference type="GO" id="GO:0004519">
    <property type="term" value="F:endonuclease activity"/>
    <property type="evidence" value="ECO:0007669"/>
    <property type="project" value="UniProtKB-KW"/>
</dbReference>
<dbReference type="GO" id="GO:0008081">
    <property type="term" value="F:phosphoric diester hydrolase activity"/>
    <property type="evidence" value="ECO:0000318"/>
    <property type="project" value="GO_Central"/>
</dbReference>
<dbReference type="GO" id="GO:0008270">
    <property type="term" value="F:zinc ion binding"/>
    <property type="evidence" value="ECO:0007669"/>
    <property type="project" value="UniProtKB-KW"/>
</dbReference>
<dbReference type="GO" id="GO:0006284">
    <property type="term" value="P:base-excision repair"/>
    <property type="evidence" value="ECO:0000318"/>
    <property type="project" value="GO_Central"/>
</dbReference>
<dbReference type="GO" id="GO:0006310">
    <property type="term" value="P:DNA recombination"/>
    <property type="evidence" value="ECO:0007669"/>
    <property type="project" value="UniProtKB-KW"/>
</dbReference>
<dbReference type="CDD" id="cd09088">
    <property type="entry name" value="Ape2-like_AP-endo"/>
    <property type="match status" value="1"/>
</dbReference>
<dbReference type="FunFam" id="3.60.10.10:FF:000030">
    <property type="entry name" value="DNA-(apurinic or apyrimidinic site) lyase"/>
    <property type="match status" value="1"/>
</dbReference>
<dbReference type="Gene3D" id="3.60.10.10">
    <property type="entry name" value="Endonuclease/exonuclease/phosphatase"/>
    <property type="match status" value="1"/>
</dbReference>
<dbReference type="InterPro" id="IPR004808">
    <property type="entry name" value="AP_endonuc_1"/>
</dbReference>
<dbReference type="InterPro" id="IPR020847">
    <property type="entry name" value="AP_endonuclease_F1_BS"/>
</dbReference>
<dbReference type="InterPro" id="IPR036691">
    <property type="entry name" value="Endo/exonu/phosph_ase_sf"/>
</dbReference>
<dbReference type="InterPro" id="IPR005135">
    <property type="entry name" value="Endo/exonuclease/phosphatase"/>
</dbReference>
<dbReference type="InterPro" id="IPR010666">
    <property type="entry name" value="Znf_GRF"/>
</dbReference>
<dbReference type="NCBIfam" id="TIGR00633">
    <property type="entry name" value="xth"/>
    <property type="match status" value="1"/>
</dbReference>
<dbReference type="PANTHER" id="PTHR22748">
    <property type="entry name" value="AP ENDONUCLEASE"/>
    <property type="match status" value="1"/>
</dbReference>
<dbReference type="PANTHER" id="PTHR22748:SF27">
    <property type="entry name" value="DNA-(APURINIC OR APYRIMIDINIC SITE) ENDONUCLEASE 2"/>
    <property type="match status" value="1"/>
</dbReference>
<dbReference type="Pfam" id="PF03372">
    <property type="entry name" value="Exo_endo_phos"/>
    <property type="match status" value="1"/>
</dbReference>
<dbReference type="Pfam" id="PF06839">
    <property type="entry name" value="Zn_ribbon_GRF"/>
    <property type="match status" value="1"/>
</dbReference>
<dbReference type="SUPFAM" id="SSF56219">
    <property type="entry name" value="DNase I-like"/>
    <property type="match status" value="1"/>
</dbReference>
<dbReference type="PROSITE" id="PS00726">
    <property type="entry name" value="AP_NUCLEASE_F1_1"/>
    <property type="match status" value="1"/>
</dbReference>
<dbReference type="PROSITE" id="PS51435">
    <property type="entry name" value="AP_NUCLEASE_F1_4"/>
    <property type="match status" value="1"/>
</dbReference>
<dbReference type="PROSITE" id="PS51999">
    <property type="entry name" value="ZF_GRF"/>
    <property type="match status" value="1"/>
</dbReference>
<evidence type="ECO:0000250" key="1">
    <source>
        <dbReference type="UniProtKB" id="P27695"/>
    </source>
</evidence>
<evidence type="ECO:0000250" key="2">
    <source>
        <dbReference type="UniProtKB" id="Q68G58"/>
    </source>
</evidence>
<evidence type="ECO:0000255" key="3">
    <source>
        <dbReference type="PROSITE-ProRule" id="PRU00764"/>
    </source>
</evidence>
<evidence type="ECO:0000255" key="4">
    <source>
        <dbReference type="PROSITE-ProRule" id="PRU01343"/>
    </source>
</evidence>
<evidence type="ECO:0000256" key="5">
    <source>
        <dbReference type="SAM" id="MobiDB-lite"/>
    </source>
</evidence>
<evidence type="ECO:0000269" key="6">
    <source>
    </source>
</evidence>
<evidence type="ECO:0000269" key="7">
    <source>
    </source>
</evidence>
<evidence type="ECO:0000269" key="8">
    <source>
    </source>
</evidence>
<evidence type="ECO:0000269" key="9">
    <source>
    </source>
</evidence>
<evidence type="ECO:0000269" key="10">
    <source>
    </source>
</evidence>
<evidence type="ECO:0000269" key="11">
    <source>
    </source>
</evidence>
<evidence type="ECO:0000269" key="12">
    <source>
    </source>
</evidence>
<evidence type="ECO:0000269" key="13">
    <source ref="5"/>
</evidence>
<evidence type="ECO:0000305" key="14"/>
<evidence type="ECO:0000305" key="15">
    <source>
    </source>
</evidence>
<sequence>MLRVVSWNINGIRRPLQGVANQEPSNCAAVAVGRILDELDADIVCLQETKVTRDALTEPLAIVEGYNSYFSFSRNRSGYSGVATFCKDNATPVAAEEGLSGLFATQNGDVGCYGNMDEFTQEELRALDSEGRALLTQHKIRTWEGKEKTLTLINVYCPHADPGRPERLVFKMRFYRLLQIRAEALLAAGSHVIILGDLNTAHRPIDHWDAVNLECFEEDPGRKWMDSLLSNLGCQSASHVGPFIDSYRCFQPKQEGAFTCWSAVTGARHLNYGSRLDYVLGDRTLVIDTFQASFLLPEVMGSDHCPVGAVLSVSSVPAKQCPPLCTRFLPEFAGTQLKILRFLVPLEQSPVLEQSTLQHNNQTRVQTCQNKAQVRSTRPQPSQVGSSRGQKNLKSYFQPSPSCPQASPDIELPSLPLMSALMTPKTPEEKAVAKVVKGQAKTSEAKDEKELRTSFWKSVLAGPLRTPLCGGHREPCVMRTVKKPGPNLGRRFYMCARPRGPPTDPSSRCNFFLWSRPS</sequence>
<comment type="function">
    <text evidence="2 6 7 8 10">Functions as a weak apurinic/apyrimidinic (AP) endodeoxyribonuclease in the DNA base excision repair (BER) pathway of DNA lesions induced by oxidative and alkylating agents (PubMed:16687656). Initiates repair of AP sites in DNA by catalyzing hydrolytic incision of the phosphodiester backbone immediately adjacent to the damage, generating a single-strand break with 5'-deoxyribose phosphate and 3'-hydroxyl ends. Also displays double-stranded DNA 3'-5' exonuclease, 3'-phosphodiesterase activities (PubMed:16687656, PubMed:19443450, PubMed:32516598). Shows robust 3'-5' exonuclease activity on 3'-recessed heteroduplex DNA and is able to remove mismatched nucleotides preferentially (PubMed:16687656, PubMed:19443450). Also exhibits 3'-5' exonuclease activity on a single nucleotide gap containing heteroduplex DNA and on blunt-ended substrates (PubMed:16687656). Shows fairly strong 3'-phosphodiesterase activity involved in the removal of 3'-damaged termini formed in DNA by oxidative agents (PubMed:16687656, PubMed:19443450). In the nucleus functions in the PCNA-dependent BER pathway (PubMed:11376153). Plays a role in reversing blocked 3' DNA ends, problematic lesions that preclude DNA synthesis (PubMed:32516598). Required for somatic hypermutation (SHM) and DNA cleavage step of class switch recombination (CSR) of immunoglobulin genes (By similarity). Required for proper cell cycle progression during proliferation of peripheral lymphocytes (By similarity).</text>
</comment>
<comment type="catalytic activity">
    <reaction evidence="7 8 10">
        <text>Exonucleolytic cleavage in the 3'- to 5'-direction to yield nucleoside 5'-phosphates.</text>
        <dbReference type="EC" id="3.1.11.2"/>
    </reaction>
</comment>
<comment type="cofactor">
    <cofactor evidence="1">
        <name>Mg(2+)</name>
        <dbReference type="ChEBI" id="CHEBI:18420"/>
    </cofactor>
    <cofactor evidence="1">
        <name>Mn(2+)</name>
        <dbReference type="ChEBI" id="CHEBI:29035"/>
    </cofactor>
    <text evidence="1">Probably binds two magnesium or manganese ions per subunit.</text>
</comment>
<comment type="activity regulation">
    <text evidence="7 8">3'-5' exonuclease activity is activated by sodium and manganese (PubMed:16687656). 3'-5' exonuclease and 3'-phosphodiesterase activities are stimulated in presence of PCNA (PubMed:19443450).</text>
</comment>
<comment type="biophysicochemical properties">
    <phDependence>
        <text evidence="7">Optimum pH is 6.0-8.0.</text>
    </phDependence>
</comment>
<comment type="subunit">
    <text evidence="6 10">Interacts with PCNA; this interaction is triggered by reactive oxygen species and increased by misincorporation of uracil in nuclear DNA.</text>
</comment>
<comment type="interaction">
    <interactant intactId="EBI-742588">
        <id>Q9UBZ4</id>
    </interactant>
    <interactant intactId="EBI-81711">
        <id>Q99767</id>
        <label>APBA2</label>
    </interactant>
    <organismsDiffer>false</organismsDiffer>
    <experiments>3</experiments>
</comment>
<comment type="interaction">
    <interactant intactId="EBI-742588">
        <id>Q9UBZ4</id>
    </interactant>
    <interactant intactId="EBI-2340269">
        <id>Q13064</id>
        <label>MKRN3</label>
    </interactant>
    <organismsDiffer>false</organismsDiffer>
    <experiments>3</experiments>
</comment>
<comment type="interaction">
    <interactant intactId="EBI-742588">
        <id>Q9UBZ4</id>
    </interactant>
    <interactant intactId="EBI-9053916">
        <id>Q63HK5</id>
        <label>TSHZ3</label>
    </interactant>
    <organismsDiffer>false</organismsDiffer>
    <experiments>3</experiments>
</comment>
<comment type="subcellular location">
    <subcellularLocation>
        <location evidence="3 6 8">Nucleus</location>
    </subcellularLocation>
    <subcellularLocation>
        <location>Cytoplasm</location>
    </subcellularLocation>
    <subcellularLocation>
        <location evidence="15">Mitochondrion</location>
    </subcellularLocation>
    <text evidence="8">Together with PCNA, is redistributed in discrete nuclear foci in presence of oxidative DNA damaging agents.</text>
</comment>
<comment type="tissue specificity">
    <text evidence="6">Highly expressed in brain and kidney. Weakly expressed in the fetal brain.</text>
</comment>
<comment type="domain">
    <text evidence="6 10">The PCNA interacting protein (PIP) box mediates interaction with PCNA and recruitment to DNA single-strand breaks.</text>
</comment>
<comment type="PTM">
    <text evidence="11 12">Ubiquitinated by the CUL9-RBX1 complex (PubMed:38605244). Ubiquitinated by MKRN3 at Lys-371 leading to proteasomal degradation (PubMed:38705397).</text>
</comment>
<comment type="similarity">
    <text evidence="14">Belongs to the DNA repair enzymes AP/ExoA family.</text>
</comment>
<name>APEX2_HUMAN</name>
<gene>
    <name type="primary">APEX2</name>
    <name type="synonym">APE2</name>
    <name type="synonym">APEXL2</name>
    <name type="synonym">XTH2</name>
</gene>